<feature type="chain" id="PRO_1000143238" description="Small ribosomal subunit protein uS17">
    <location>
        <begin position="1"/>
        <end position="83"/>
    </location>
</feature>
<evidence type="ECO:0000255" key="1">
    <source>
        <dbReference type="HAMAP-Rule" id="MF_01345"/>
    </source>
</evidence>
<evidence type="ECO:0000305" key="2"/>
<sequence length="83" mass="9645">MASDVRGRRKTKIGVVVSSKMEKTVVVRVERVYSHPQYAKVVRDSSKYYAHNELDVKEGDTVRIQETRPLSKTKRWRVVGRVN</sequence>
<name>RS17_CHLT2</name>
<protein>
    <recommendedName>
        <fullName evidence="1">Small ribosomal subunit protein uS17</fullName>
    </recommendedName>
    <alternativeName>
        <fullName evidence="2">30S ribosomal protein S17</fullName>
    </alternativeName>
</protein>
<keyword id="KW-0687">Ribonucleoprotein</keyword>
<keyword id="KW-0689">Ribosomal protein</keyword>
<keyword id="KW-0694">RNA-binding</keyword>
<keyword id="KW-0699">rRNA-binding</keyword>
<accession>B0B893</accession>
<accession>P28545</accession>
<reference key="1">
    <citation type="journal article" date="1992" name="J. Bacteriol.">
        <title>Cloning and sequence analysis of the Chlamydia trachomatis spc ribosomal protein gene cluster.</title>
        <authorList>
            <person name="Kaul R."/>
            <person name="Gray G.J."/>
            <person name="Koehncke N.R."/>
            <person name="Gu L.J."/>
        </authorList>
    </citation>
    <scope>NUCLEOTIDE SEQUENCE [GENOMIC DNA]</scope>
</reference>
<reference key="2">
    <citation type="journal article" date="2008" name="Genome Res.">
        <title>Chlamydia trachomatis: genome sequence analysis of lymphogranuloma venereum isolates.</title>
        <authorList>
            <person name="Thomson N.R."/>
            <person name="Holden M.T.G."/>
            <person name="Carder C."/>
            <person name="Lennard N."/>
            <person name="Lockey S.J."/>
            <person name="Marsh P."/>
            <person name="Skipp P."/>
            <person name="O'Connor C.D."/>
            <person name="Goodhead I."/>
            <person name="Norbertzcak H."/>
            <person name="Harris B."/>
            <person name="Ormond D."/>
            <person name="Rance R."/>
            <person name="Quail M.A."/>
            <person name="Parkhill J."/>
            <person name="Stephens R.S."/>
            <person name="Clarke I.N."/>
        </authorList>
    </citation>
    <scope>NUCLEOTIDE SEQUENCE [LARGE SCALE GENOMIC DNA]</scope>
    <source>
        <strain>ATCC VR-902B / DSM 19102 / 434/Bu</strain>
    </source>
</reference>
<gene>
    <name evidence="1" type="primary">rpsQ</name>
    <name type="ordered locus">CTL0781</name>
</gene>
<organism>
    <name type="scientific">Chlamydia trachomatis serovar L2 (strain ATCC VR-902B / DSM 19102 / 434/Bu)</name>
    <dbReference type="NCBI Taxonomy" id="471472"/>
    <lineage>
        <taxon>Bacteria</taxon>
        <taxon>Pseudomonadati</taxon>
        <taxon>Chlamydiota</taxon>
        <taxon>Chlamydiia</taxon>
        <taxon>Chlamydiales</taxon>
        <taxon>Chlamydiaceae</taxon>
        <taxon>Chlamydia/Chlamydophila group</taxon>
        <taxon>Chlamydia</taxon>
    </lineage>
</organism>
<dbReference type="EMBL" id="M80325">
    <property type="protein sequence ID" value="AAA23171.1"/>
    <property type="molecule type" value="Genomic_DNA"/>
</dbReference>
<dbReference type="EMBL" id="AM884176">
    <property type="protein sequence ID" value="CAP04219.1"/>
    <property type="molecule type" value="Genomic_DNA"/>
</dbReference>
<dbReference type="PIR" id="C42645">
    <property type="entry name" value="C42645"/>
</dbReference>
<dbReference type="RefSeq" id="WP_009871883.1">
    <property type="nucleotide sequence ID" value="NC_010287.1"/>
</dbReference>
<dbReference type="RefSeq" id="YP_001654852.1">
    <property type="nucleotide sequence ID" value="NC_010287.1"/>
</dbReference>
<dbReference type="SMR" id="B0B893"/>
<dbReference type="GeneID" id="93065358"/>
<dbReference type="KEGG" id="ctb:CTL0781"/>
<dbReference type="PATRIC" id="fig|471472.4.peg.837"/>
<dbReference type="HOGENOM" id="CLU_073626_1_0_0"/>
<dbReference type="Proteomes" id="UP001154402">
    <property type="component" value="Chromosome"/>
</dbReference>
<dbReference type="GO" id="GO:0022627">
    <property type="term" value="C:cytosolic small ribosomal subunit"/>
    <property type="evidence" value="ECO:0007669"/>
    <property type="project" value="TreeGrafter"/>
</dbReference>
<dbReference type="GO" id="GO:0019843">
    <property type="term" value="F:rRNA binding"/>
    <property type="evidence" value="ECO:0007669"/>
    <property type="project" value="UniProtKB-UniRule"/>
</dbReference>
<dbReference type="GO" id="GO:0003735">
    <property type="term" value="F:structural constituent of ribosome"/>
    <property type="evidence" value="ECO:0007669"/>
    <property type="project" value="InterPro"/>
</dbReference>
<dbReference type="GO" id="GO:0006412">
    <property type="term" value="P:translation"/>
    <property type="evidence" value="ECO:0007669"/>
    <property type="project" value="UniProtKB-UniRule"/>
</dbReference>
<dbReference type="CDD" id="cd00364">
    <property type="entry name" value="Ribosomal_uS17"/>
    <property type="match status" value="1"/>
</dbReference>
<dbReference type="FunFam" id="2.40.50.140:FF:000462">
    <property type="entry name" value="30S ribosomal protein S17"/>
    <property type="match status" value="1"/>
</dbReference>
<dbReference type="Gene3D" id="2.40.50.140">
    <property type="entry name" value="Nucleic acid-binding proteins"/>
    <property type="match status" value="1"/>
</dbReference>
<dbReference type="HAMAP" id="MF_01345_B">
    <property type="entry name" value="Ribosomal_uS17_B"/>
    <property type="match status" value="1"/>
</dbReference>
<dbReference type="InterPro" id="IPR012340">
    <property type="entry name" value="NA-bd_OB-fold"/>
</dbReference>
<dbReference type="InterPro" id="IPR000266">
    <property type="entry name" value="Ribosomal_uS17"/>
</dbReference>
<dbReference type="InterPro" id="IPR019984">
    <property type="entry name" value="Ribosomal_uS17_bact/chlr"/>
</dbReference>
<dbReference type="InterPro" id="IPR019979">
    <property type="entry name" value="Ribosomal_uS17_CS"/>
</dbReference>
<dbReference type="NCBIfam" id="NF004123">
    <property type="entry name" value="PRK05610.1"/>
    <property type="match status" value="1"/>
</dbReference>
<dbReference type="NCBIfam" id="TIGR03635">
    <property type="entry name" value="uS17_bact"/>
    <property type="match status" value="1"/>
</dbReference>
<dbReference type="PANTHER" id="PTHR10744">
    <property type="entry name" value="40S RIBOSOMAL PROTEIN S11 FAMILY MEMBER"/>
    <property type="match status" value="1"/>
</dbReference>
<dbReference type="PANTHER" id="PTHR10744:SF1">
    <property type="entry name" value="SMALL RIBOSOMAL SUBUNIT PROTEIN US17M"/>
    <property type="match status" value="1"/>
</dbReference>
<dbReference type="Pfam" id="PF00366">
    <property type="entry name" value="Ribosomal_S17"/>
    <property type="match status" value="1"/>
</dbReference>
<dbReference type="PRINTS" id="PR00973">
    <property type="entry name" value="RIBOSOMALS17"/>
</dbReference>
<dbReference type="SUPFAM" id="SSF50249">
    <property type="entry name" value="Nucleic acid-binding proteins"/>
    <property type="match status" value="1"/>
</dbReference>
<dbReference type="PROSITE" id="PS00056">
    <property type="entry name" value="RIBOSOMAL_S17"/>
    <property type="match status" value="1"/>
</dbReference>
<comment type="function">
    <text evidence="1">One of the primary rRNA binding proteins, it binds specifically to the 5'-end of 16S ribosomal RNA.</text>
</comment>
<comment type="subunit">
    <text evidence="1">Part of the 30S ribosomal subunit.</text>
</comment>
<comment type="similarity">
    <text evidence="1">Belongs to the universal ribosomal protein uS17 family.</text>
</comment>
<proteinExistence type="inferred from homology"/>